<comment type="function">
    <text evidence="1 3 5">RNA-binding protein involved in deadenylation-dependent decapping of mRNAs, leading to the degradation of mRNAs. Acts as a scaffold protein that connects deadenylation and decapping machinery (By similarity). Required for the recruitment of P-body components such as cgh-1 in somatic blastomeres (PubMed:18692039). May play a role in recruiting the decapping enzyme dcap-1 to cytoplasmic puncta in the cell body of the posterior touch receptor neuron, PLM (PubMed:31983639).</text>
</comment>
<comment type="subcellular location">
    <subcellularLocation>
        <location evidence="3 4">Cytoplasm</location>
        <location evidence="3 4">P-body</location>
    </subcellularLocation>
</comment>
<comment type="developmental stage">
    <text evidence="3">Localizes to germline and somatic blastomeres (at protein level).</text>
</comment>
<comment type="disruption phenotype">
    <text evidence="3">RNAi-mediated knockdown reduces the number of cgh-1-positive foci in somatic blastomeres.</text>
</comment>
<comment type="similarity">
    <text evidence="6">Belongs to the PAT1 family.</text>
</comment>
<feature type="chain" id="PRO_0000404582" description="Protein PAT1 homolog 1">
    <location>
        <begin position="1"/>
        <end position="833"/>
    </location>
</feature>
<feature type="region of interest" description="Disordered" evidence="2">
    <location>
        <begin position="279"/>
        <end position="313"/>
    </location>
</feature>
<feature type="region of interest" description="Disordered" evidence="2">
    <location>
        <begin position="398"/>
        <end position="427"/>
    </location>
</feature>
<feature type="region of interest" description="Disordered" evidence="2">
    <location>
        <begin position="492"/>
        <end position="549"/>
    </location>
</feature>
<feature type="compositionally biased region" description="Low complexity" evidence="2">
    <location>
        <begin position="303"/>
        <end position="313"/>
    </location>
</feature>
<feature type="compositionally biased region" description="Polar residues" evidence="2">
    <location>
        <begin position="398"/>
        <end position="408"/>
    </location>
</feature>
<sequence length="833" mass="93672">MEEVKKYGKTLEEIEGGLMFDDFPESLVDSDEDHNIFDDEFDAANDETFGGGLDNIGENAELENYATQTAKLRFDDPVWQKPSSSDHVAPSASEIPIPFPNFGNGDASDSFKSSFEAESPFLKKSIWGNGTDGAYNIWGTNFGISSVPAAPTLDLDFGALLPTPTIQATKEVKSSQIPSMPSSALTLEDCERMQMGNKPDSLVDAFKDLQLGSTPVQPQSAQFSKHPLEARIAAPGTPATASSQALPTLPTAALSLEELELQIMKEAQILKGRQQVPSDMREDNKFSHPPPGFNQNVQPRMDPSLSPGGMHGMPPSMGTSMPHMGPMMPPQNMQLPRLPPLNPQFLPLIPVWFNAIINNIQLPMGVPPPPPFLFQLLNHYRNPQLVHAMIMQSSIPPNIRQNGPQFSHPSGPHSPGNRVQRKHSGMPSTRTIYDLALDSFAGYMSYKEREWLIRIQFIQCKGSGDPQVDDYYYVTWRDKQIANGWTAETKLEEATKEKKEKSSESQKDYLERISRMNYREMQKERARERDKERQRERQERIDRGEDKKLRQTLSDKFATSLGLPSKSSTHNPRHVLDMKAQVESVDNQTKKLSDEERKIAVAKKLRTMLLRLEGALNILMEVDELRRSSLPEKSQFKDLSSDEKDQEVEKRTTVIINELMGDDLSKLMQMSKGRAVITRTLKVVEPRDQARIILALMTAGGLVSKKMYGEIVLDILPVVYQKVSNLHPDQFKYLVGALNLDTLKRQLLDSNMFIRDMMMTLFFVSVKNNQQLVEWAKATKFSSLKMPSSAPLSIWRKALSVISDSEIKEFADDIKYSGIVDCHDVAQLIEQSL</sequence>
<gene>
    <name evidence="7" type="primary">patr-1</name>
    <name evidence="7" type="ORF">F43G6.9</name>
</gene>
<accession>Q20374</accession>
<reference key="1">
    <citation type="journal article" date="1998" name="Science">
        <title>Genome sequence of the nematode C. elegans: a platform for investigating biology.</title>
        <authorList>
            <consortium name="The C. elegans sequencing consortium"/>
        </authorList>
    </citation>
    <scope>NUCLEOTIDE SEQUENCE [LARGE SCALE GENOMIC DNA]</scope>
    <source>
        <strain>Bristol N2</strain>
    </source>
</reference>
<reference key="2">
    <citation type="journal article" date="2008" name="Dev. Biol.">
        <title>Processing bodies and germ granules are distinct RNA granules that interact in C. elegans embryos.</title>
        <authorList>
            <person name="Gallo C.M."/>
            <person name="Munro E."/>
            <person name="Rasoloson D."/>
            <person name="Merritt C."/>
            <person name="Seydoux G."/>
        </authorList>
    </citation>
    <scope>FUNCTION</scope>
    <scope>SUBCELLULAR LOCATION</scope>
    <scope>DEVELOPMENTAL STAGE</scope>
    <scope>DISRUPTION PHENOTYPE</scope>
</reference>
<reference key="3">
    <citation type="journal article" date="2008" name="J. Cell Biol.">
        <title>Protection of specific maternal messenger RNAs by the P body protein CGH-1 (Dhh1/RCK) during Caenorhabditis elegans oogenesis.</title>
        <authorList>
            <person name="Boag P.R."/>
            <person name="Atalay A."/>
            <person name="Robida S."/>
            <person name="Reinke V."/>
            <person name="Blackwell T.K."/>
        </authorList>
    </citation>
    <scope>SUBCELLULAR LOCATION</scope>
</reference>
<reference key="4">
    <citation type="journal article" date="2020" name="Curr. Biol.">
        <title>The mRNA Decay Factor CAR-1/LSM14 Regulates Axon Regeneration via Mitochondrial Calcium Dynamics.</title>
        <authorList>
            <person name="Tang N.H."/>
            <person name="Kim K.W."/>
            <person name="Xu S."/>
            <person name="Blazie S.M."/>
            <person name="Yee B.A."/>
            <person name="Yeo G.W."/>
            <person name="Jin Y."/>
            <person name="Chisholm A.D."/>
        </authorList>
    </citation>
    <scope>FUNCTION</scope>
</reference>
<proteinExistence type="evidence at protein level"/>
<protein>
    <recommendedName>
        <fullName>Protein PAT1 homolog 1</fullName>
    </recommendedName>
</protein>
<evidence type="ECO:0000250" key="1"/>
<evidence type="ECO:0000256" key="2">
    <source>
        <dbReference type="SAM" id="MobiDB-lite"/>
    </source>
</evidence>
<evidence type="ECO:0000269" key="3">
    <source>
    </source>
</evidence>
<evidence type="ECO:0000269" key="4">
    <source>
    </source>
</evidence>
<evidence type="ECO:0000269" key="5">
    <source>
    </source>
</evidence>
<evidence type="ECO:0000305" key="6"/>
<evidence type="ECO:0000312" key="7">
    <source>
        <dbReference type="WormBase" id="F43G6.9"/>
    </source>
</evidence>
<name>PATR1_CAEEL</name>
<keyword id="KW-0963">Cytoplasm</keyword>
<keyword id="KW-1185">Reference proteome</keyword>
<keyword id="KW-0694">RNA-binding</keyword>
<dbReference type="EMBL" id="BX284602">
    <property type="protein sequence ID" value="CAA90402.1"/>
    <property type="molecule type" value="Genomic_DNA"/>
</dbReference>
<dbReference type="EMBL" id="Z83108">
    <property type="protein sequence ID" value="CAA90402.1"/>
    <property type="status" value="JOINED"/>
    <property type="molecule type" value="Genomic_DNA"/>
</dbReference>
<dbReference type="PIR" id="T22139">
    <property type="entry name" value="T22139"/>
</dbReference>
<dbReference type="RefSeq" id="NP_496514.1">
    <property type="nucleotide sequence ID" value="NM_064113.7"/>
</dbReference>
<dbReference type="BioGRID" id="40112">
    <property type="interactions" value="11"/>
</dbReference>
<dbReference type="FunCoup" id="Q20374">
    <property type="interactions" value="1814"/>
</dbReference>
<dbReference type="STRING" id="6239.F43G6.9.1"/>
<dbReference type="PaxDb" id="6239-F43G6.9"/>
<dbReference type="PeptideAtlas" id="Q20374"/>
<dbReference type="EnsemblMetazoa" id="F43G6.9.1">
    <property type="protein sequence ID" value="F43G6.9.1"/>
    <property type="gene ID" value="WBGene00009661"/>
</dbReference>
<dbReference type="GeneID" id="174808"/>
<dbReference type="KEGG" id="cel:CELE_F43G6.9"/>
<dbReference type="UCSC" id="F43G6.9.1">
    <property type="organism name" value="c. elegans"/>
</dbReference>
<dbReference type="AGR" id="WB:WBGene00009661"/>
<dbReference type="CTD" id="42058"/>
<dbReference type="WormBase" id="F43G6.9">
    <property type="protein sequence ID" value="CE18675"/>
    <property type="gene ID" value="WBGene00009661"/>
    <property type="gene designation" value="patr-1"/>
</dbReference>
<dbReference type="eggNOG" id="KOG4592">
    <property type="taxonomic scope" value="Eukaryota"/>
</dbReference>
<dbReference type="GeneTree" id="ENSGT00520000055649"/>
<dbReference type="HOGENOM" id="CLU_363404_0_0_1"/>
<dbReference type="InParanoid" id="Q20374"/>
<dbReference type="OMA" id="STHNPRH"/>
<dbReference type="OrthoDB" id="74835at2759"/>
<dbReference type="Reactome" id="R-CEL-430039">
    <property type="pathway name" value="mRNA decay by 5' to 3' exoribonuclease"/>
</dbReference>
<dbReference type="CD-CODE" id="73A75392">
    <property type="entry name" value="P-granule"/>
</dbReference>
<dbReference type="PRO" id="PR:Q20374"/>
<dbReference type="Proteomes" id="UP000001940">
    <property type="component" value="Chromosome II"/>
</dbReference>
<dbReference type="Bgee" id="WBGene00009661">
    <property type="expression patterns" value="Expressed in germ line (C elegans) and 4 other cell types or tissues"/>
</dbReference>
<dbReference type="GO" id="GO:0000932">
    <property type="term" value="C:P-body"/>
    <property type="evidence" value="ECO:0000314"/>
    <property type="project" value="WormBase"/>
</dbReference>
<dbReference type="GO" id="GO:0003723">
    <property type="term" value="F:RNA binding"/>
    <property type="evidence" value="ECO:0000318"/>
    <property type="project" value="GO_Central"/>
</dbReference>
<dbReference type="GO" id="GO:0000290">
    <property type="term" value="P:deadenylation-dependent decapping of nuclear-transcribed mRNA"/>
    <property type="evidence" value="ECO:0000318"/>
    <property type="project" value="GO_Central"/>
</dbReference>
<dbReference type="GO" id="GO:0008340">
    <property type="term" value="P:determination of adult lifespan"/>
    <property type="evidence" value="ECO:0000315"/>
    <property type="project" value="WormBase"/>
</dbReference>
<dbReference type="GO" id="GO:0033962">
    <property type="term" value="P:P-body assembly"/>
    <property type="evidence" value="ECO:0000318"/>
    <property type="project" value="GO_Central"/>
</dbReference>
<dbReference type="InterPro" id="IPR039900">
    <property type="entry name" value="Pat1-like"/>
</dbReference>
<dbReference type="PANTHER" id="PTHR21551:SF0">
    <property type="entry name" value="PROTEIN ASSOCIATED WITH TOPO II RELATED-1, ISOFORM A"/>
    <property type="match status" value="1"/>
</dbReference>
<dbReference type="PANTHER" id="PTHR21551">
    <property type="entry name" value="TOPOISOMERASE II-ASSOCIATED PROTEIN PAT1"/>
    <property type="match status" value="1"/>
</dbReference>
<organism>
    <name type="scientific">Caenorhabditis elegans</name>
    <dbReference type="NCBI Taxonomy" id="6239"/>
    <lineage>
        <taxon>Eukaryota</taxon>
        <taxon>Metazoa</taxon>
        <taxon>Ecdysozoa</taxon>
        <taxon>Nematoda</taxon>
        <taxon>Chromadorea</taxon>
        <taxon>Rhabditida</taxon>
        <taxon>Rhabditina</taxon>
        <taxon>Rhabditomorpha</taxon>
        <taxon>Rhabditoidea</taxon>
        <taxon>Rhabditidae</taxon>
        <taxon>Peloderinae</taxon>
        <taxon>Caenorhabditis</taxon>
    </lineage>
</organism>